<reference key="1">
    <citation type="submission" date="2007-03" db="EMBL/GenBank/DDBJ databases">
        <title>Annotation of Culex pipiens quinquefasciatus.</title>
        <authorList>
            <consortium name="The Broad Institute Genome Sequencing Platform"/>
            <person name="Atkinson P.W."/>
            <person name="Hemingway J."/>
            <person name="Christensen B.M."/>
            <person name="Higgs S."/>
            <person name="Kodira C.D."/>
            <person name="Hannick L.I."/>
            <person name="Megy K."/>
            <person name="O'Leary S.B."/>
            <person name="Pearson M."/>
            <person name="Haas B.J."/>
            <person name="Mauceli E."/>
            <person name="Wortman J.R."/>
            <person name="Lee N.H."/>
            <person name="Guigo R."/>
            <person name="Stanke M."/>
            <person name="Alvarado L."/>
            <person name="Amedeo P."/>
            <person name="Antoine C.H."/>
            <person name="Arensburger P."/>
            <person name="Bidwell S.L."/>
            <person name="Crawford M."/>
            <person name="Camaro F."/>
            <person name="Devon K."/>
            <person name="Engels R."/>
            <person name="Hammond M."/>
            <person name="Howarth C."/>
            <person name="Koehrsen M."/>
            <person name="Lawson D."/>
            <person name="Montgomery P."/>
            <person name="Nene V."/>
            <person name="Nusbaum C."/>
            <person name="Puiu D."/>
            <person name="Romero-Severson J."/>
            <person name="Severson D.W."/>
            <person name="Shumway M."/>
            <person name="Sisk P."/>
            <person name="Stolte C."/>
            <person name="Zeng Q."/>
            <person name="Eisenstadt E."/>
            <person name="Fraser-Liggett C.M."/>
            <person name="Strausberg R."/>
            <person name="Galagan J."/>
            <person name="Birren B."/>
            <person name="Collins F.H."/>
        </authorList>
    </citation>
    <scope>NUCLEOTIDE SEQUENCE [LARGE SCALE GENOMIC DNA]</scope>
    <source>
        <strain>JHB</strain>
    </source>
</reference>
<gene>
    <name type="ORF">CPIJ010920</name>
</gene>
<keyword id="KW-1185">Reference proteome</keyword>
<keyword id="KW-0808">Transferase</keyword>
<keyword id="KW-0833">Ubl conjugation pathway</keyword>
<evidence type="ECO:0000250" key="1">
    <source>
        <dbReference type="UniProtKB" id="O94874"/>
    </source>
</evidence>
<evidence type="ECO:0000256" key="2">
    <source>
        <dbReference type="SAM" id="MobiDB-lite"/>
    </source>
</evidence>
<evidence type="ECO:0000305" key="3"/>
<accession>B0WU24</accession>
<comment type="function">
    <text evidence="1">E3 UFM1-protein ligase that mediates ufmylation of target proteins.</text>
</comment>
<comment type="similarity">
    <text evidence="3">Belongs to the UFL1 family.</text>
</comment>
<organism>
    <name type="scientific">Culex quinquefasciatus</name>
    <name type="common">Southern house mosquito</name>
    <name type="synonym">Culex pungens</name>
    <dbReference type="NCBI Taxonomy" id="7176"/>
    <lineage>
        <taxon>Eukaryota</taxon>
        <taxon>Metazoa</taxon>
        <taxon>Ecdysozoa</taxon>
        <taxon>Arthropoda</taxon>
        <taxon>Hexapoda</taxon>
        <taxon>Insecta</taxon>
        <taxon>Pterygota</taxon>
        <taxon>Neoptera</taxon>
        <taxon>Endopterygota</taxon>
        <taxon>Diptera</taxon>
        <taxon>Nematocera</taxon>
        <taxon>Culicoidea</taxon>
        <taxon>Culicidae</taxon>
        <taxon>Culicinae</taxon>
        <taxon>Culicini</taxon>
        <taxon>Culex</taxon>
        <taxon>Culex</taxon>
    </lineage>
</organism>
<name>UFL1_CULQU</name>
<proteinExistence type="inferred from homology"/>
<dbReference type="EC" id="2.3.2.-"/>
<dbReference type="EMBL" id="DS232099">
    <property type="protein sequence ID" value="EDS34740.1"/>
    <property type="molecule type" value="Genomic_DNA"/>
</dbReference>
<dbReference type="RefSeq" id="XP_001857545.1">
    <property type="nucleotide sequence ID" value="XM_001857502.1"/>
</dbReference>
<dbReference type="SMR" id="B0WU24"/>
<dbReference type="FunCoup" id="B0WU24">
    <property type="interactions" value="2469"/>
</dbReference>
<dbReference type="STRING" id="7176.B0WU24"/>
<dbReference type="EnsemblMetazoa" id="CPIJ010920-RA">
    <property type="protein sequence ID" value="CPIJ010920-PA"/>
    <property type="gene ID" value="CPIJ010920"/>
</dbReference>
<dbReference type="KEGG" id="cqu:CpipJ_CPIJ010920"/>
<dbReference type="CTD" id="23376"/>
<dbReference type="VEuPathDB" id="VectorBase:CPIJ010920"/>
<dbReference type="VEuPathDB" id="VectorBase:CQUJHB001851"/>
<dbReference type="eggNOG" id="KOG2235">
    <property type="taxonomic scope" value="Eukaryota"/>
</dbReference>
<dbReference type="HOGENOM" id="CLU_012417_1_1_1"/>
<dbReference type="InParanoid" id="B0WU24"/>
<dbReference type="OMA" id="CILHASG"/>
<dbReference type="OrthoDB" id="10258297at2759"/>
<dbReference type="PhylomeDB" id="B0WU24"/>
<dbReference type="Proteomes" id="UP000002320">
    <property type="component" value="Unassembled WGS sequence"/>
</dbReference>
<dbReference type="GO" id="GO:0005789">
    <property type="term" value="C:endoplasmic reticulum membrane"/>
    <property type="evidence" value="ECO:0007669"/>
    <property type="project" value="TreeGrafter"/>
</dbReference>
<dbReference type="GO" id="GO:0061666">
    <property type="term" value="F:UFM1 ligase activity"/>
    <property type="evidence" value="ECO:0007669"/>
    <property type="project" value="InterPro"/>
</dbReference>
<dbReference type="GO" id="GO:1990592">
    <property type="term" value="P:protein K69-linked ufmylation"/>
    <property type="evidence" value="ECO:0007669"/>
    <property type="project" value="TreeGrafter"/>
</dbReference>
<dbReference type="GO" id="GO:0032434">
    <property type="term" value="P:regulation of proteasomal ubiquitin-dependent protein catabolic process"/>
    <property type="evidence" value="ECO:0007669"/>
    <property type="project" value="TreeGrafter"/>
</dbReference>
<dbReference type="GO" id="GO:0034976">
    <property type="term" value="P:response to endoplasmic reticulum stress"/>
    <property type="evidence" value="ECO:0007669"/>
    <property type="project" value="TreeGrafter"/>
</dbReference>
<dbReference type="InterPro" id="IPR018611">
    <property type="entry name" value="Ufl1"/>
</dbReference>
<dbReference type="InterPro" id="IPR056761">
    <property type="entry name" value="Ufl1-like_C"/>
</dbReference>
<dbReference type="InterPro" id="IPR056580">
    <property type="entry name" value="Ufl1_dom"/>
</dbReference>
<dbReference type="InterPro" id="IPR056579">
    <property type="entry name" value="Ufl1_N"/>
</dbReference>
<dbReference type="PANTHER" id="PTHR31057">
    <property type="entry name" value="E3 UFM1-PROTEIN LIGASE 1"/>
    <property type="match status" value="1"/>
</dbReference>
<dbReference type="PANTHER" id="PTHR31057:SF0">
    <property type="entry name" value="E3 UFM1-PROTEIN LIGASE 1"/>
    <property type="match status" value="1"/>
</dbReference>
<dbReference type="Pfam" id="PF09743">
    <property type="entry name" value="E3_UFM1_ligase"/>
    <property type="match status" value="1"/>
</dbReference>
<dbReference type="Pfam" id="PF23659">
    <property type="entry name" value="UFL1"/>
    <property type="match status" value="1"/>
</dbReference>
<dbReference type="Pfam" id="PF25041">
    <property type="entry name" value="UFL1_C"/>
    <property type="match status" value="1"/>
</dbReference>
<feature type="chain" id="PRO_0000391878" description="E3 UFM1-protein ligase 1 homolog">
    <location>
        <begin position="1"/>
        <end position="785"/>
    </location>
</feature>
<feature type="region of interest" description="Disordered" evidence="2">
    <location>
        <begin position="396"/>
        <end position="473"/>
    </location>
</feature>
<feature type="compositionally biased region" description="Basic and acidic residues" evidence="2">
    <location>
        <begin position="396"/>
        <end position="416"/>
    </location>
</feature>
<feature type="compositionally biased region" description="Basic residues" evidence="2">
    <location>
        <begin position="439"/>
        <end position="449"/>
    </location>
</feature>
<sequence>MTSDWDEIKRLASDFQKAQLTTSLQRLSERNCVEVVSLLIEKGLLEVIYTTDGKEYLTQVHLKQEVRDEMFVRGGRVNLVDLSKALTVDFEKVQVVAEQIVVEDRSVKFILGQLIEQFYMERVASEINEKLAQVGEINVADLTVQYDLPADFILNNIILRHLNKTIMGKQDSSNANIFFTQSYVARSKAKVRGALAAITKPTPVSAILAQCGIPDRLFNLLVNEVATLGSVTSRTPGALYIPHIYTKTQVEWVQNFYRQNGYLEHDSVAGLGVTDVKNFIVNQLPNEKIVHLKKCSVGEKLIEQVASSLEECISTSTYLDVSTVLPSIMSDEDVDQLLTIVLTAPMQKQVLIFNSTILTTKFVEDMIKPCYDIAVENAKKSVDSGTYQQYMAEKMMKHQDVIPDKESAENKADKRDERRKKAAGGKAGGGAQGRETKTKSTKKHARGHRGNVSDSDEDFGPAEKSAGGKKGAKEASIELITVKDISKVLHGGLEEEGLEDLAKQLAQHYYPQFSRLALAKAHELYEISLHQNNQNRRQTHANLQDKLNNLFNDIRLYEKGIKLLPADVQPQLVKYLLKSLGTDFCNEIFFYVAAECNLNSNGTTLTVEQRNKIAADCGQEYRGALQALNKATASSAAVDDFLVVAENSLQACSMILKKIDKKKDRNLILCHKHGLLEQLANCSDPALVLHLAVLILFTISTQSMLHASGRHVSAILSFLQPALAPEQAQTLTTYHDLVLKLLSVENASDDSKADADEVKQQLEKLTPTVKDIAGNYKKAGLTSAE</sequence>
<protein>
    <recommendedName>
        <fullName>E3 UFM1-protein ligase 1 homolog</fullName>
        <ecNumber>2.3.2.-</ecNumber>
    </recommendedName>
    <alternativeName>
        <fullName evidence="3">E3 UFM1-protein transferase 1 homolog</fullName>
    </alternativeName>
</protein>